<accession>B7V1D3</accession>
<feature type="chain" id="PRO_1000117273" description="Sugar fermentation stimulation protein homolog">
    <location>
        <begin position="1"/>
        <end position="235"/>
    </location>
</feature>
<proteinExistence type="inferred from homology"/>
<protein>
    <recommendedName>
        <fullName evidence="1">Sugar fermentation stimulation protein homolog</fullName>
    </recommendedName>
</protein>
<reference key="1">
    <citation type="journal article" date="2009" name="Genome Res.">
        <title>Newly introduced genomic prophage islands are critical determinants of in vivo competitiveness in the Liverpool epidemic strain of Pseudomonas aeruginosa.</title>
        <authorList>
            <person name="Winstanley C."/>
            <person name="Langille M.G.I."/>
            <person name="Fothergill J.L."/>
            <person name="Kukavica-Ibrulj I."/>
            <person name="Paradis-Bleau C."/>
            <person name="Sanschagrin F."/>
            <person name="Thomson N.R."/>
            <person name="Winsor G.L."/>
            <person name="Quail M.A."/>
            <person name="Lennard N."/>
            <person name="Bignell A."/>
            <person name="Clarke L."/>
            <person name="Seeger K."/>
            <person name="Saunders D."/>
            <person name="Harris D."/>
            <person name="Parkhill J."/>
            <person name="Hancock R.E.W."/>
            <person name="Brinkman F.S.L."/>
            <person name="Levesque R.C."/>
        </authorList>
    </citation>
    <scope>NUCLEOTIDE SEQUENCE [LARGE SCALE GENOMIC DNA]</scope>
    <source>
        <strain>LESB58</strain>
    </source>
</reference>
<comment type="similarity">
    <text evidence="1">Belongs to the SfsA family.</text>
</comment>
<name>SFSA_PSEA8</name>
<organism>
    <name type="scientific">Pseudomonas aeruginosa (strain LESB58)</name>
    <dbReference type="NCBI Taxonomy" id="557722"/>
    <lineage>
        <taxon>Bacteria</taxon>
        <taxon>Pseudomonadati</taxon>
        <taxon>Pseudomonadota</taxon>
        <taxon>Gammaproteobacteria</taxon>
        <taxon>Pseudomonadales</taxon>
        <taxon>Pseudomonadaceae</taxon>
        <taxon>Pseudomonas</taxon>
    </lineage>
</organism>
<evidence type="ECO:0000255" key="1">
    <source>
        <dbReference type="HAMAP-Rule" id="MF_00095"/>
    </source>
</evidence>
<gene>
    <name evidence="1" type="primary">sfsA</name>
    <name type="ordered locus">PLES_51061</name>
</gene>
<dbReference type="EMBL" id="FM209186">
    <property type="protein sequence ID" value="CAW29860.1"/>
    <property type="molecule type" value="Genomic_DNA"/>
</dbReference>
<dbReference type="RefSeq" id="WP_003100180.1">
    <property type="nucleotide sequence ID" value="NC_011770.1"/>
</dbReference>
<dbReference type="SMR" id="B7V1D3"/>
<dbReference type="KEGG" id="pag:PLES_51061"/>
<dbReference type="HOGENOM" id="CLU_052299_2_0_6"/>
<dbReference type="GO" id="GO:0003677">
    <property type="term" value="F:DNA binding"/>
    <property type="evidence" value="ECO:0007669"/>
    <property type="project" value="InterPro"/>
</dbReference>
<dbReference type="CDD" id="cd22359">
    <property type="entry name" value="SfsA-like_bacterial"/>
    <property type="match status" value="1"/>
</dbReference>
<dbReference type="FunFam" id="2.40.50.580:FF:000001">
    <property type="entry name" value="Sugar fermentation stimulation protein A"/>
    <property type="match status" value="1"/>
</dbReference>
<dbReference type="FunFam" id="3.40.1350.60:FF:000001">
    <property type="entry name" value="Sugar fermentation stimulation protein A"/>
    <property type="match status" value="1"/>
</dbReference>
<dbReference type="Gene3D" id="2.40.50.580">
    <property type="match status" value="1"/>
</dbReference>
<dbReference type="Gene3D" id="3.40.1350.60">
    <property type="match status" value="1"/>
</dbReference>
<dbReference type="HAMAP" id="MF_00095">
    <property type="entry name" value="SfsA"/>
    <property type="match status" value="1"/>
</dbReference>
<dbReference type="InterPro" id="IPR005224">
    <property type="entry name" value="SfsA"/>
</dbReference>
<dbReference type="InterPro" id="IPR040452">
    <property type="entry name" value="SfsA_C"/>
</dbReference>
<dbReference type="InterPro" id="IPR041465">
    <property type="entry name" value="SfsA_N"/>
</dbReference>
<dbReference type="NCBIfam" id="TIGR00230">
    <property type="entry name" value="sfsA"/>
    <property type="match status" value="1"/>
</dbReference>
<dbReference type="PANTHER" id="PTHR30545">
    <property type="entry name" value="SUGAR FERMENTATION STIMULATION PROTEIN A"/>
    <property type="match status" value="1"/>
</dbReference>
<dbReference type="PANTHER" id="PTHR30545:SF2">
    <property type="entry name" value="SUGAR FERMENTATION STIMULATION PROTEIN A"/>
    <property type="match status" value="1"/>
</dbReference>
<dbReference type="Pfam" id="PF03749">
    <property type="entry name" value="SfsA"/>
    <property type="match status" value="1"/>
</dbReference>
<dbReference type="Pfam" id="PF17746">
    <property type="entry name" value="SfsA_N"/>
    <property type="match status" value="1"/>
</dbReference>
<sequence>MRFEQPLEEGRLLRRYKRFLADIESAGGERLTIHCPNTGSMLNCMSEGCRVWFSRSNDPKRKLPGTWELSETPQGRLACVNTARANRLVEEALLAGDIAELAGFTALRREVAYGVENSRADFRLEYPTGALFIEVKSVTLGFDETAVAAFPDAVTLRGAKHLRELAALAREGIRAVQLYCVNLSGVEAVRPADEIDPAYGKALREAAQAGVEVLAYGAEVTTEGLHLARRLPVRL</sequence>